<proteinExistence type="inferred from homology"/>
<name>NUOH_ECOUT</name>
<keyword id="KW-0997">Cell inner membrane</keyword>
<keyword id="KW-1003">Cell membrane</keyword>
<keyword id="KW-0472">Membrane</keyword>
<keyword id="KW-0520">NAD</keyword>
<keyword id="KW-0874">Quinone</keyword>
<keyword id="KW-1278">Translocase</keyword>
<keyword id="KW-0812">Transmembrane</keyword>
<keyword id="KW-1133">Transmembrane helix</keyword>
<keyword id="KW-0830">Ubiquinone</keyword>
<evidence type="ECO:0000255" key="1">
    <source>
        <dbReference type="HAMAP-Rule" id="MF_01350"/>
    </source>
</evidence>
<dbReference type="EC" id="7.1.1.-" evidence="1"/>
<dbReference type="EMBL" id="CP000243">
    <property type="protein sequence ID" value="ABE08029.1"/>
    <property type="molecule type" value="Genomic_DNA"/>
</dbReference>
<dbReference type="RefSeq" id="WP_000118512.1">
    <property type="nucleotide sequence ID" value="NZ_CP064825.1"/>
</dbReference>
<dbReference type="SMR" id="Q1R9D5"/>
<dbReference type="KEGG" id="eci:UTI89_C2562"/>
<dbReference type="HOGENOM" id="CLU_015134_0_1_6"/>
<dbReference type="Proteomes" id="UP000001952">
    <property type="component" value="Chromosome"/>
</dbReference>
<dbReference type="GO" id="GO:0005886">
    <property type="term" value="C:plasma membrane"/>
    <property type="evidence" value="ECO:0007669"/>
    <property type="project" value="UniProtKB-SubCell"/>
</dbReference>
<dbReference type="GO" id="GO:0003954">
    <property type="term" value="F:NADH dehydrogenase activity"/>
    <property type="evidence" value="ECO:0007669"/>
    <property type="project" value="TreeGrafter"/>
</dbReference>
<dbReference type="GO" id="GO:0016655">
    <property type="term" value="F:oxidoreductase activity, acting on NAD(P)H, quinone or similar compound as acceptor"/>
    <property type="evidence" value="ECO:0007669"/>
    <property type="project" value="UniProtKB-UniRule"/>
</dbReference>
<dbReference type="GO" id="GO:0048038">
    <property type="term" value="F:quinone binding"/>
    <property type="evidence" value="ECO:0007669"/>
    <property type="project" value="UniProtKB-KW"/>
</dbReference>
<dbReference type="GO" id="GO:0009060">
    <property type="term" value="P:aerobic respiration"/>
    <property type="evidence" value="ECO:0007669"/>
    <property type="project" value="TreeGrafter"/>
</dbReference>
<dbReference type="HAMAP" id="MF_01350">
    <property type="entry name" value="NDH1_NuoH"/>
    <property type="match status" value="1"/>
</dbReference>
<dbReference type="InterPro" id="IPR001694">
    <property type="entry name" value="NADH_UbQ_OxRdtase_su1/FPO"/>
</dbReference>
<dbReference type="InterPro" id="IPR018086">
    <property type="entry name" value="NADH_UbQ_OxRdtase_su1_CS"/>
</dbReference>
<dbReference type="NCBIfam" id="NF004740">
    <property type="entry name" value="PRK06076.1-1"/>
    <property type="match status" value="1"/>
</dbReference>
<dbReference type="NCBIfam" id="NF004741">
    <property type="entry name" value="PRK06076.1-2"/>
    <property type="match status" value="1"/>
</dbReference>
<dbReference type="PANTHER" id="PTHR11432">
    <property type="entry name" value="NADH DEHYDROGENASE SUBUNIT 1"/>
    <property type="match status" value="1"/>
</dbReference>
<dbReference type="PANTHER" id="PTHR11432:SF3">
    <property type="entry name" value="NADH-UBIQUINONE OXIDOREDUCTASE CHAIN 1"/>
    <property type="match status" value="1"/>
</dbReference>
<dbReference type="Pfam" id="PF00146">
    <property type="entry name" value="NADHdh"/>
    <property type="match status" value="1"/>
</dbReference>
<dbReference type="PROSITE" id="PS00667">
    <property type="entry name" value="COMPLEX1_ND1_1"/>
    <property type="match status" value="1"/>
</dbReference>
<dbReference type="PROSITE" id="PS00668">
    <property type="entry name" value="COMPLEX1_ND1_2"/>
    <property type="match status" value="1"/>
</dbReference>
<feature type="chain" id="PRO_0000298809" description="NADH-quinone oxidoreductase subunit H">
    <location>
        <begin position="1"/>
        <end position="325"/>
    </location>
</feature>
<feature type="transmembrane region" description="Helical" evidence="1">
    <location>
        <begin position="11"/>
        <end position="31"/>
    </location>
</feature>
<feature type="transmembrane region" description="Helical" evidence="1">
    <location>
        <begin position="81"/>
        <end position="101"/>
    </location>
</feature>
<feature type="transmembrane region" description="Helical" evidence="1">
    <location>
        <begin position="114"/>
        <end position="134"/>
    </location>
</feature>
<feature type="transmembrane region" description="Helical" evidence="1">
    <location>
        <begin position="154"/>
        <end position="174"/>
    </location>
</feature>
<feature type="transmembrane region" description="Helical" evidence="1">
    <location>
        <begin position="186"/>
        <end position="206"/>
    </location>
</feature>
<feature type="transmembrane region" description="Helical" evidence="1">
    <location>
        <begin position="237"/>
        <end position="257"/>
    </location>
</feature>
<feature type="transmembrane region" description="Helical" evidence="1">
    <location>
        <begin position="265"/>
        <end position="285"/>
    </location>
</feature>
<feature type="transmembrane region" description="Helical" evidence="1">
    <location>
        <begin position="304"/>
        <end position="324"/>
    </location>
</feature>
<reference key="1">
    <citation type="journal article" date="2006" name="Proc. Natl. Acad. Sci. U.S.A.">
        <title>Identification of genes subject to positive selection in uropathogenic strains of Escherichia coli: a comparative genomics approach.</title>
        <authorList>
            <person name="Chen S.L."/>
            <person name="Hung C.-S."/>
            <person name="Xu J."/>
            <person name="Reigstad C.S."/>
            <person name="Magrini V."/>
            <person name="Sabo A."/>
            <person name="Blasiar D."/>
            <person name="Bieri T."/>
            <person name="Meyer R.R."/>
            <person name="Ozersky P."/>
            <person name="Armstrong J.R."/>
            <person name="Fulton R.S."/>
            <person name="Latreille J.P."/>
            <person name="Spieth J."/>
            <person name="Hooton T.M."/>
            <person name="Mardis E.R."/>
            <person name="Hultgren S.J."/>
            <person name="Gordon J.I."/>
        </authorList>
    </citation>
    <scope>NUCLEOTIDE SEQUENCE [LARGE SCALE GENOMIC DNA]</scope>
    <source>
        <strain>UTI89 / UPEC</strain>
    </source>
</reference>
<comment type="function">
    <text evidence="1">NDH-1 shuttles electrons from NADH, via FMN and iron-sulfur (Fe-S) centers, to quinones in the respiratory chain. The immediate electron acceptor for the enzyme in this species is believed to be ubiquinone. Couples the redox reaction to proton translocation (for every two electrons transferred, four hydrogen ions are translocated across the cytoplasmic membrane), and thus conserves the redox energy in a proton gradient. This subunit may bind ubiquinone.</text>
</comment>
<comment type="catalytic activity">
    <reaction evidence="1">
        <text>a quinone + NADH + 5 H(+)(in) = a quinol + NAD(+) + 4 H(+)(out)</text>
        <dbReference type="Rhea" id="RHEA:57888"/>
        <dbReference type="ChEBI" id="CHEBI:15378"/>
        <dbReference type="ChEBI" id="CHEBI:24646"/>
        <dbReference type="ChEBI" id="CHEBI:57540"/>
        <dbReference type="ChEBI" id="CHEBI:57945"/>
        <dbReference type="ChEBI" id="CHEBI:132124"/>
    </reaction>
</comment>
<comment type="subunit">
    <text evidence="1">NDH-1 is composed of 13 different subunits. Subunits NuoA, H, J, K, L, M, N constitute the membrane sector of the complex.</text>
</comment>
<comment type="subcellular location">
    <subcellularLocation>
        <location evidence="1">Cell inner membrane</location>
        <topology evidence="1">Multi-pass membrane protein</topology>
    </subcellularLocation>
</comment>
<comment type="similarity">
    <text evidence="1">Belongs to the complex I subunit 1 family.</text>
</comment>
<gene>
    <name evidence="1" type="primary">nuoH</name>
    <name type="ordered locus">UTI89_C2562</name>
</gene>
<protein>
    <recommendedName>
        <fullName evidence="1">NADH-quinone oxidoreductase subunit H</fullName>
        <ecNumber evidence="1">7.1.1.-</ecNumber>
    </recommendedName>
    <alternativeName>
        <fullName evidence="1">NADH dehydrogenase I subunit H</fullName>
    </alternativeName>
    <alternativeName>
        <fullName evidence="1">NDH-1 subunit H</fullName>
    </alternativeName>
</protein>
<accession>Q1R9D5</accession>
<sequence length="325" mass="36205">MSWISPELIEILLTVLKAVVILLVVVTCGAFMSFGERRLLGLFQNRYGPNRVGWGGSLQLVADMIKMFFKEDWIPKFSDRVIFTLAPMIAFTSLLLAFAIVPVSPGWVVADLNIGILFFLMMAGLAVYAVLFAGWSSNNKYSLLGAMRASAQTLSYEVFLGLSLMGVVAQAGSFNMTDIVNSQAHVWNVIPQFFGFITFAIAGVAVCHRHPFDQPEAEQELADGYHIEYSGMKFGLFFVGEYIGIVTISALMVTLFFGGWQGPLLPPFIWFALKTAFFMMMFILIRASLPRPRYDQVMSFGWKICLPLTLINLLVTAAVILWQAQ</sequence>
<organism>
    <name type="scientific">Escherichia coli (strain UTI89 / UPEC)</name>
    <dbReference type="NCBI Taxonomy" id="364106"/>
    <lineage>
        <taxon>Bacteria</taxon>
        <taxon>Pseudomonadati</taxon>
        <taxon>Pseudomonadota</taxon>
        <taxon>Gammaproteobacteria</taxon>
        <taxon>Enterobacterales</taxon>
        <taxon>Enterobacteriaceae</taxon>
        <taxon>Escherichia</taxon>
    </lineage>
</organism>